<evidence type="ECO:0000255" key="1">
    <source>
        <dbReference type="HAMAP-Rule" id="MF_00184"/>
    </source>
</evidence>
<evidence type="ECO:0000255" key="2">
    <source>
        <dbReference type="PROSITE-ProRule" id="PRU01228"/>
    </source>
</evidence>
<organism>
    <name type="scientific">Rickettsia peacockii (strain Rustic)</name>
    <dbReference type="NCBI Taxonomy" id="562019"/>
    <lineage>
        <taxon>Bacteria</taxon>
        <taxon>Pseudomonadati</taxon>
        <taxon>Pseudomonadota</taxon>
        <taxon>Alphaproteobacteria</taxon>
        <taxon>Rickettsiales</taxon>
        <taxon>Rickettsiaceae</taxon>
        <taxon>Rickettsieae</taxon>
        <taxon>Rickettsia</taxon>
        <taxon>spotted fever group</taxon>
    </lineage>
</organism>
<proteinExistence type="inferred from homology"/>
<gene>
    <name evidence="1" type="primary">thrS</name>
    <name type="ordered locus">RPR_01780</name>
</gene>
<name>SYT_RICPU</name>
<comment type="function">
    <text evidence="1">Catalyzes the attachment of threonine to tRNA(Thr) in a two-step reaction: L-threonine is first activated by ATP to form Thr-AMP and then transferred to the acceptor end of tRNA(Thr). Also edits incorrectly charged L-seryl-tRNA(Thr).</text>
</comment>
<comment type="catalytic activity">
    <reaction evidence="1">
        <text>tRNA(Thr) + L-threonine + ATP = L-threonyl-tRNA(Thr) + AMP + diphosphate + H(+)</text>
        <dbReference type="Rhea" id="RHEA:24624"/>
        <dbReference type="Rhea" id="RHEA-COMP:9670"/>
        <dbReference type="Rhea" id="RHEA-COMP:9704"/>
        <dbReference type="ChEBI" id="CHEBI:15378"/>
        <dbReference type="ChEBI" id="CHEBI:30616"/>
        <dbReference type="ChEBI" id="CHEBI:33019"/>
        <dbReference type="ChEBI" id="CHEBI:57926"/>
        <dbReference type="ChEBI" id="CHEBI:78442"/>
        <dbReference type="ChEBI" id="CHEBI:78534"/>
        <dbReference type="ChEBI" id="CHEBI:456215"/>
        <dbReference type="EC" id="6.1.1.3"/>
    </reaction>
</comment>
<comment type="cofactor">
    <cofactor evidence="1">
        <name>Zn(2+)</name>
        <dbReference type="ChEBI" id="CHEBI:29105"/>
    </cofactor>
    <text evidence="1">Binds 1 zinc ion per subunit.</text>
</comment>
<comment type="subunit">
    <text evidence="1">Homodimer.</text>
</comment>
<comment type="subcellular location">
    <subcellularLocation>
        <location evidence="1">Cytoplasm</location>
    </subcellularLocation>
</comment>
<comment type="similarity">
    <text evidence="1">Belongs to the class-II aminoacyl-tRNA synthetase family.</text>
</comment>
<feature type="chain" id="PRO_1000203918" description="Threonine--tRNA ligase">
    <location>
        <begin position="1"/>
        <end position="635"/>
    </location>
</feature>
<feature type="domain" description="TGS" evidence="2">
    <location>
        <begin position="1"/>
        <end position="61"/>
    </location>
</feature>
<feature type="region of interest" description="Catalytic" evidence="1">
    <location>
        <begin position="242"/>
        <end position="533"/>
    </location>
</feature>
<feature type="binding site" evidence="1">
    <location>
        <position position="333"/>
    </location>
    <ligand>
        <name>Zn(2+)</name>
        <dbReference type="ChEBI" id="CHEBI:29105"/>
    </ligand>
</feature>
<feature type="binding site" evidence="1">
    <location>
        <position position="384"/>
    </location>
    <ligand>
        <name>Zn(2+)</name>
        <dbReference type="ChEBI" id="CHEBI:29105"/>
    </ligand>
</feature>
<feature type="binding site" evidence="1">
    <location>
        <position position="510"/>
    </location>
    <ligand>
        <name>Zn(2+)</name>
        <dbReference type="ChEBI" id="CHEBI:29105"/>
    </ligand>
</feature>
<dbReference type="EC" id="6.1.1.3" evidence="1"/>
<dbReference type="EMBL" id="CP001227">
    <property type="protein sequence ID" value="ACR47224.1"/>
    <property type="molecule type" value="Genomic_DNA"/>
</dbReference>
<dbReference type="RefSeq" id="WP_012736505.1">
    <property type="nucleotide sequence ID" value="NC_012730.1"/>
</dbReference>
<dbReference type="SMR" id="C4K0X3"/>
<dbReference type="KEGG" id="rpk:RPR_01780"/>
<dbReference type="HOGENOM" id="CLU_008554_0_1_5"/>
<dbReference type="Proteomes" id="UP000005015">
    <property type="component" value="Chromosome"/>
</dbReference>
<dbReference type="GO" id="GO:0005737">
    <property type="term" value="C:cytoplasm"/>
    <property type="evidence" value="ECO:0007669"/>
    <property type="project" value="UniProtKB-SubCell"/>
</dbReference>
<dbReference type="GO" id="GO:0005524">
    <property type="term" value="F:ATP binding"/>
    <property type="evidence" value="ECO:0007669"/>
    <property type="project" value="UniProtKB-UniRule"/>
</dbReference>
<dbReference type="GO" id="GO:0046872">
    <property type="term" value="F:metal ion binding"/>
    <property type="evidence" value="ECO:0007669"/>
    <property type="project" value="UniProtKB-KW"/>
</dbReference>
<dbReference type="GO" id="GO:0004829">
    <property type="term" value="F:threonine-tRNA ligase activity"/>
    <property type="evidence" value="ECO:0007669"/>
    <property type="project" value="UniProtKB-UniRule"/>
</dbReference>
<dbReference type="GO" id="GO:0000049">
    <property type="term" value="F:tRNA binding"/>
    <property type="evidence" value="ECO:0007669"/>
    <property type="project" value="UniProtKB-KW"/>
</dbReference>
<dbReference type="GO" id="GO:0006435">
    <property type="term" value="P:threonyl-tRNA aminoacylation"/>
    <property type="evidence" value="ECO:0007669"/>
    <property type="project" value="UniProtKB-UniRule"/>
</dbReference>
<dbReference type="CDD" id="cd01667">
    <property type="entry name" value="TGS_ThrRS"/>
    <property type="match status" value="1"/>
</dbReference>
<dbReference type="CDD" id="cd00860">
    <property type="entry name" value="ThrRS_anticodon"/>
    <property type="match status" value="1"/>
</dbReference>
<dbReference type="CDD" id="cd00771">
    <property type="entry name" value="ThrRS_core"/>
    <property type="match status" value="1"/>
</dbReference>
<dbReference type="FunFam" id="3.10.20.30:FF:000005">
    <property type="entry name" value="Threonine--tRNA ligase"/>
    <property type="match status" value="1"/>
</dbReference>
<dbReference type="FunFam" id="3.30.54.20:FF:000002">
    <property type="entry name" value="Threonine--tRNA ligase"/>
    <property type="match status" value="1"/>
</dbReference>
<dbReference type="FunFam" id="3.30.930.10:FF:000002">
    <property type="entry name" value="Threonine--tRNA ligase"/>
    <property type="match status" value="1"/>
</dbReference>
<dbReference type="FunFam" id="3.40.50.800:FF:000001">
    <property type="entry name" value="Threonine--tRNA ligase"/>
    <property type="match status" value="1"/>
</dbReference>
<dbReference type="FunFam" id="3.30.980.10:FF:000005">
    <property type="entry name" value="Threonyl-tRNA synthetase, mitochondrial"/>
    <property type="match status" value="1"/>
</dbReference>
<dbReference type="Gene3D" id="3.10.20.30">
    <property type="match status" value="1"/>
</dbReference>
<dbReference type="Gene3D" id="3.30.54.20">
    <property type="match status" value="1"/>
</dbReference>
<dbReference type="Gene3D" id="3.40.50.800">
    <property type="entry name" value="Anticodon-binding domain"/>
    <property type="match status" value="1"/>
</dbReference>
<dbReference type="Gene3D" id="3.30.930.10">
    <property type="entry name" value="Bira Bifunctional Protein, Domain 2"/>
    <property type="match status" value="1"/>
</dbReference>
<dbReference type="Gene3D" id="3.30.980.10">
    <property type="entry name" value="Threonyl-trna Synthetase, Chain A, domain 2"/>
    <property type="match status" value="1"/>
</dbReference>
<dbReference type="HAMAP" id="MF_00184">
    <property type="entry name" value="Thr_tRNA_synth"/>
    <property type="match status" value="1"/>
</dbReference>
<dbReference type="InterPro" id="IPR002314">
    <property type="entry name" value="aa-tRNA-synt_IIb"/>
</dbReference>
<dbReference type="InterPro" id="IPR006195">
    <property type="entry name" value="aa-tRNA-synth_II"/>
</dbReference>
<dbReference type="InterPro" id="IPR045864">
    <property type="entry name" value="aa-tRNA-synth_II/BPL/LPL"/>
</dbReference>
<dbReference type="InterPro" id="IPR004154">
    <property type="entry name" value="Anticodon-bd"/>
</dbReference>
<dbReference type="InterPro" id="IPR036621">
    <property type="entry name" value="Anticodon-bd_dom_sf"/>
</dbReference>
<dbReference type="InterPro" id="IPR012675">
    <property type="entry name" value="Beta-grasp_dom_sf"/>
</dbReference>
<dbReference type="InterPro" id="IPR004095">
    <property type="entry name" value="TGS"/>
</dbReference>
<dbReference type="InterPro" id="IPR012676">
    <property type="entry name" value="TGS-like"/>
</dbReference>
<dbReference type="InterPro" id="IPR002320">
    <property type="entry name" value="Thr-tRNA-ligase_IIa"/>
</dbReference>
<dbReference type="InterPro" id="IPR018163">
    <property type="entry name" value="Thr/Ala-tRNA-synth_IIc_edit"/>
</dbReference>
<dbReference type="InterPro" id="IPR047246">
    <property type="entry name" value="ThrRS_anticodon"/>
</dbReference>
<dbReference type="InterPro" id="IPR033728">
    <property type="entry name" value="ThrRS_core"/>
</dbReference>
<dbReference type="InterPro" id="IPR012947">
    <property type="entry name" value="tRNA_SAD"/>
</dbReference>
<dbReference type="NCBIfam" id="TIGR00418">
    <property type="entry name" value="thrS"/>
    <property type="match status" value="1"/>
</dbReference>
<dbReference type="PANTHER" id="PTHR11451:SF44">
    <property type="entry name" value="THREONINE--TRNA LIGASE, CHLOROPLASTIC_MITOCHONDRIAL 2"/>
    <property type="match status" value="1"/>
</dbReference>
<dbReference type="PANTHER" id="PTHR11451">
    <property type="entry name" value="THREONINE-TRNA LIGASE"/>
    <property type="match status" value="1"/>
</dbReference>
<dbReference type="Pfam" id="PF03129">
    <property type="entry name" value="HGTP_anticodon"/>
    <property type="match status" value="1"/>
</dbReference>
<dbReference type="Pfam" id="PF02824">
    <property type="entry name" value="TGS"/>
    <property type="match status" value="1"/>
</dbReference>
<dbReference type="Pfam" id="PF00587">
    <property type="entry name" value="tRNA-synt_2b"/>
    <property type="match status" value="1"/>
</dbReference>
<dbReference type="Pfam" id="PF07973">
    <property type="entry name" value="tRNA_SAD"/>
    <property type="match status" value="1"/>
</dbReference>
<dbReference type="PRINTS" id="PR01047">
    <property type="entry name" value="TRNASYNTHTHR"/>
</dbReference>
<dbReference type="SMART" id="SM00863">
    <property type="entry name" value="tRNA_SAD"/>
    <property type="match status" value="1"/>
</dbReference>
<dbReference type="SUPFAM" id="SSF52954">
    <property type="entry name" value="Class II aaRS ABD-related"/>
    <property type="match status" value="1"/>
</dbReference>
<dbReference type="SUPFAM" id="SSF55681">
    <property type="entry name" value="Class II aaRS and biotin synthetases"/>
    <property type="match status" value="1"/>
</dbReference>
<dbReference type="SUPFAM" id="SSF81271">
    <property type="entry name" value="TGS-like"/>
    <property type="match status" value="1"/>
</dbReference>
<dbReference type="SUPFAM" id="SSF55186">
    <property type="entry name" value="ThrRS/AlaRS common domain"/>
    <property type="match status" value="1"/>
</dbReference>
<dbReference type="PROSITE" id="PS50862">
    <property type="entry name" value="AA_TRNA_LIGASE_II"/>
    <property type="match status" value="1"/>
</dbReference>
<dbReference type="PROSITE" id="PS51880">
    <property type="entry name" value="TGS"/>
    <property type="match status" value="1"/>
</dbReference>
<accession>C4K0X3</accession>
<keyword id="KW-0030">Aminoacyl-tRNA synthetase</keyword>
<keyword id="KW-0067">ATP-binding</keyword>
<keyword id="KW-0963">Cytoplasm</keyword>
<keyword id="KW-0436">Ligase</keyword>
<keyword id="KW-0479">Metal-binding</keyword>
<keyword id="KW-0547">Nucleotide-binding</keyword>
<keyword id="KW-0648">Protein biosynthesis</keyword>
<keyword id="KW-0694">RNA-binding</keyword>
<keyword id="KW-0820">tRNA-binding</keyword>
<keyword id="KW-0862">Zinc</keyword>
<reference key="1">
    <citation type="journal article" date="2009" name="PLoS ONE">
        <title>Genome sequence of the endosymbiont Rickettsia peacockii and comparison with virulent Rickettsia rickettsii: identification of virulence factors.</title>
        <authorList>
            <person name="Felsheim R.F."/>
            <person name="Kurtti T.J."/>
            <person name="Munderloh U.G."/>
        </authorList>
    </citation>
    <scope>NUCLEOTIDE SEQUENCE [LARGE SCALE GENOMIC DNA]</scope>
    <source>
        <strain>Rustic</strain>
    </source>
</reference>
<sequence length="635" mass="72312">MINISFPDGSIKQFAKNITAYEVANAISMSLAKAAMVAEINGELQDLSIVIDNDCKLRILTAKDPECLEIIRHDAAHLTAEAVKELFPETQVTIGPAIENGYYYDFARDTPFTTDDLAVIEAKMQELSQKNEQVTRELWDRDKAVEFFKSIGEHYKAEIIASIPAGEPITLYRQGNFIDLCRGPHAPSTGVVKHFKLMKVAGAYWRGDSRNEMLQRIYGTAWATKEQLDSYLLMLEEAEKRDHRKLGRELDLFHFQEEAQGMVFWHDKGWSIYNTIEQYIRKKIRKNGYTEVKTPVLVDKSLWEASGHWEKFRDDMFALETDDKTLALKPMNCPCHVQIFKQGIKSYRDLPLRMSEFGLCHRNEASGALHGLMRVRSLVQDDAHIFCAAEQITDETVSFCKLLTEVYKDFGFTDIKVKFSDRPEIRAGSNEVWDKAENALKEAVEQAGFTYTLNPGEGAFYGPKLEFVLTDAIGRQWQCGTLQMDFVLPERLDASYVAASGEKKRPVMLHRAILGSLERFIGILIEEYAGRFPLWLAPVQVAIATITSDLNDYALEVQKALIDNGVRTDFNISPDKINYKIREFSNQKIPMIAVIGKQEQKNKQVAIRRLGTTDQEVLSVEQLIAVVKEENEKYL</sequence>
<protein>
    <recommendedName>
        <fullName evidence="1">Threonine--tRNA ligase</fullName>
        <ecNumber evidence="1">6.1.1.3</ecNumber>
    </recommendedName>
    <alternativeName>
        <fullName evidence="1">Threonyl-tRNA synthetase</fullName>
        <shortName evidence="1">ThrRS</shortName>
    </alternativeName>
</protein>